<gene>
    <name evidence="4" type="primary">atg7</name>
    <name type="ORF">BofuT4_P013520.1</name>
</gene>
<feature type="chain" id="PRO_0000443882" description="Ubiquitin-like modifier-activating enzyme atg7">
    <location>
        <begin position="1"/>
        <end position="704"/>
    </location>
</feature>
<feature type="region of interest" description="Homodimerization" evidence="1">
    <location>
        <begin position="660"/>
        <end position="699"/>
    </location>
</feature>
<feature type="region of interest" description="Disordered" evidence="2">
    <location>
        <begin position="682"/>
        <end position="704"/>
    </location>
</feature>
<feature type="short sequence motif" description="GXGXXG motif" evidence="1">
    <location>
        <begin position="372"/>
        <end position="377"/>
    </location>
</feature>
<feature type="compositionally biased region" description="Acidic residues" evidence="2">
    <location>
        <begin position="687"/>
        <end position="704"/>
    </location>
</feature>
<feature type="active site" description="Glycyl thioester intermediate" evidence="1">
    <location>
        <position position="555"/>
    </location>
</feature>
<evidence type="ECO:0000250" key="1">
    <source>
        <dbReference type="UniProtKB" id="P38862"/>
    </source>
</evidence>
<evidence type="ECO:0000256" key="2">
    <source>
        <dbReference type="SAM" id="MobiDB-lite"/>
    </source>
</evidence>
<evidence type="ECO:0000269" key="3">
    <source>
    </source>
</evidence>
<evidence type="ECO:0000303" key="4">
    <source>
    </source>
</evidence>
<evidence type="ECO:0000305" key="5"/>
<sequence>MALKFAPFASEIELPFYTALSQLKIDHDKLDDSARPVLGLYEPRATQSPDQSSRMRVLGNALSSNEVPSGHIRAEGKIKNVNTIEDFKNMDKQAMLQTSAKQGQIWDAINDGTIYSIPSLLSSFTILSFANLKKYTFTYWFAFPALHSEPAWRKVEQPPKFSAEETTALTEELGTWRYSHDNREHGFFLAKRVYPSSEHPQDPESESTSDLPFKWVIGSLREFESGFFNGVDAKNQYVSFVDPSTYHENPGWMLRNLLVLVRRRYKLDKVQILCYRDNHAKRHVPQSLILILESIYDPEYQSTAPDQIPKVTGWERNSLGKLTAKVTNLAQYMDPAQLADQAVDLNLKLMKWRIAPELNLDAIKNTKCLLLGAGTLGTYVSRLLMGWGVRKITFVDNASVSFSNPVRQPLFDFKDCIDGGAKKAYRASEALQEIYPGVDSTGHVMAVPMLGHPITDEAATKMNFELLQKLIEDHDAIFLLMDTRESRWLPTVMGKAAGKIVMNAALGFDTYVVMRHGVTPEDGGPAALGCYFCNDVVAPSDLLQSVKDQTLDQQCTVTRPGVAPEASSKLVELLASVLQHPLKGAAPAPKLSSNHQSGQLEFDRDPPNHPLGLVPHQIRGFLAAYKTMLISGPSYDCCSACSPKIVNAYKEDGWEFIKRALTEKDYITELSGLAEVQRKAEAAANDVEWDSDEEGMEDEEPELL</sequence>
<organism>
    <name type="scientific">Botryotinia fuckeliana (strain T4)</name>
    <name type="common">Noble rot fungus</name>
    <name type="synonym">Botrytis cinerea</name>
    <dbReference type="NCBI Taxonomy" id="999810"/>
    <lineage>
        <taxon>Eukaryota</taxon>
        <taxon>Fungi</taxon>
        <taxon>Dikarya</taxon>
        <taxon>Ascomycota</taxon>
        <taxon>Pezizomycotina</taxon>
        <taxon>Leotiomycetes</taxon>
        <taxon>Helotiales</taxon>
        <taxon>Sclerotiniaceae</taxon>
        <taxon>Botrytis</taxon>
    </lineage>
</organism>
<keyword id="KW-0072">Autophagy</keyword>
<keyword id="KW-0963">Cytoplasm</keyword>
<keyword id="KW-0653">Protein transport</keyword>
<keyword id="KW-1185">Reference proteome</keyword>
<keyword id="KW-0813">Transport</keyword>
<keyword id="KW-0833">Ubl conjugation pathway</keyword>
<reference key="1">
    <citation type="journal article" date="2011" name="PLoS Genet.">
        <title>Genomic analysis of the necrotrophic fungal pathogens Sclerotinia sclerotiorum and Botrytis cinerea.</title>
        <authorList>
            <person name="Amselem J."/>
            <person name="Cuomo C.A."/>
            <person name="van Kan J.A.L."/>
            <person name="Viaud M."/>
            <person name="Benito E.P."/>
            <person name="Couloux A."/>
            <person name="Coutinho P.M."/>
            <person name="de Vries R.P."/>
            <person name="Dyer P.S."/>
            <person name="Fillinger S."/>
            <person name="Fournier E."/>
            <person name="Gout L."/>
            <person name="Hahn M."/>
            <person name="Kohn L."/>
            <person name="Lapalu N."/>
            <person name="Plummer K.M."/>
            <person name="Pradier J.-M."/>
            <person name="Quevillon E."/>
            <person name="Sharon A."/>
            <person name="Simon A."/>
            <person name="ten Have A."/>
            <person name="Tudzynski B."/>
            <person name="Tudzynski P."/>
            <person name="Wincker P."/>
            <person name="Andrew M."/>
            <person name="Anthouard V."/>
            <person name="Beever R.E."/>
            <person name="Beffa R."/>
            <person name="Benoit I."/>
            <person name="Bouzid O."/>
            <person name="Brault B."/>
            <person name="Chen Z."/>
            <person name="Choquer M."/>
            <person name="Collemare J."/>
            <person name="Cotton P."/>
            <person name="Danchin E.G."/>
            <person name="Da Silva C."/>
            <person name="Gautier A."/>
            <person name="Giraud C."/>
            <person name="Giraud T."/>
            <person name="Gonzalez C."/>
            <person name="Grossetete S."/>
            <person name="Gueldener U."/>
            <person name="Henrissat B."/>
            <person name="Howlett B.J."/>
            <person name="Kodira C."/>
            <person name="Kretschmer M."/>
            <person name="Lappartient A."/>
            <person name="Leroch M."/>
            <person name="Levis C."/>
            <person name="Mauceli E."/>
            <person name="Neuveglise C."/>
            <person name="Oeser B."/>
            <person name="Pearson M."/>
            <person name="Poulain J."/>
            <person name="Poussereau N."/>
            <person name="Quesneville H."/>
            <person name="Rascle C."/>
            <person name="Schumacher J."/>
            <person name="Segurens B."/>
            <person name="Sexton A."/>
            <person name="Silva E."/>
            <person name="Sirven C."/>
            <person name="Soanes D.M."/>
            <person name="Talbot N.J."/>
            <person name="Templeton M."/>
            <person name="Yandava C."/>
            <person name="Yarden O."/>
            <person name="Zeng Q."/>
            <person name="Rollins J.A."/>
            <person name="Lebrun M.-H."/>
            <person name="Dickman M."/>
        </authorList>
    </citation>
    <scope>NUCLEOTIDE SEQUENCE [LARGE SCALE GENOMIC DNA]</scope>
    <source>
        <strain>T4</strain>
    </source>
</reference>
<reference key="2">
    <citation type="journal article" date="2018" name="Curr. Genet.">
        <title>Ubiquitin-like activating enzymes BcAtg3 and BcAtg7 participate in development and pathogenesis of Botrytis cinerea.</title>
        <authorList>
            <person name="Ren W."/>
            <person name="Sang C."/>
            <person name="Shi D."/>
            <person name="Song X."/>
            <person name="Zhou M."/>
            <person name="Chen C."/>
        </authorList>
    </citation>
    <scope>FUNCTION</scope>
    <scope>DISRUPTION PHENOTYPE</scope>
    <scope>INTERACTION WITH ATG7</scope>
    <scope>SUBCELLULAR LOCATION</scope>
</reference>
<name>ATG7_BOTF4</name>
<accession>G2XR75</accession>
<proteinExistence type="evidence at protein level"/>
<protein>
    <recommendedName>
        <fullName evidence="4">Ubiquitin-like modifier-activating enzyme atg7</fullName>
    </recommendedName>
    <alternativeName>
        <fullName evidence="4">ATG12-activating enzyme E1 atg7</fullName>
    </alternativeName>
    <alternativeName>
        <fullName evidence="4">Autophagy-related protein 7</fullName>
    </alternativeName>
</protein>
<dbReference type="EMBL" id="FQ790255">
    <property type="protein sequence ID" value="CCD43243.1"/>
    <property type="molecule type" value="Genomic_DNA"/>
</dbReference>
<dbReference type="SMR" id="G2XR75"/>
<dbReference type="FunCoup" id="G2XR75">
    <property type="interactions" value="704"/>
</dbReference>
<dbReference type="STRING" id="999810.G2XR75"/>
<dbReference type="eggNOG" id="KOG2337">
    <property type="taxonomic scope" value="Eukaryota"/>
</dbReference>
<dbReference type="HOGENOM" id="CLU_012998_2_1_1"/>
<dbReference type="InParanoid" id="G2XR75"/>
<dbReference type="OrthoDB" id="34468at5178"/>
<dbReference type="PHI-base" id="PHI:7878"/>
<dbReference type="Proteomes" id="UP000008177">
    <property type="component" value="Unplaced contigs"/>
</dbReference>
<dbReference type="GO" id="GO:0000407">
    <property type="term" value="C:phagophore assembly site"/>
    <property type="evidence" value="ECO:0007669"/>
    <property type="project" value="UniProtKB-SubCell"/>
</dbReference>
<dbReference type="GO" id="GO:0019778">
    <property type="term" value="F:Atg12 activating enzyme activity"/>
    <property type="evidence" value="ECO:0007669"/>
    <property type="project" value="TreeGrafter"/>
</dbReference>
<dbReference type="GO" id="GO:0019779">
    <property type="term" value="F:Atg8 activating enzyme activity"/>
    <property type="evidence" value="ECO:0007669"/>
    <property type="project" value="TreeGrafter"/>
</dbReference>
<dbReference type="GO" id="GO:0000045">
    <property type="term" value="P:autophagosome assembly"/>
    <property type="evidence" value="ECO:0007669"/>
    <property type="project" value="TreeGrafter"/>
</dbReference>
<dbReference type="GO" id="GO:0000422">
    <property type="term" value="P:autophagy of mitochondrion"/>
    <property type="evidence" value="ECO:0007669"/>
    <property type="project" value="TreeGrafter"/>
</dbReference>
<dbReference type="GO" id="GO:0006995">
    <property type="term" value="P:cellular response to nitrogen starvation"/>
    <property type="evidence" value="ECO:0007669"/>
    <property type="project" value="TreeGrafter"/>
</dbReference>
<dbReference type="GO" id="GO:0034727">
    <property type="term" value="P:piecemeal microautophagy of the nucleus"/>
    <property type="evidence" value="ECO:0007669"/>
    <property type="project" value="TreeGrafter"/>
</dbReference>
<dbReference type="GO" id="GO:0032446">
    <property type="term" value="P:protein modification by small protein conjugation"/>
    <property type="evidence" value="ECO:0007669"/>
    <property type="project" value="TreeGrafter"/>
</dbReference>
<dbReference type="GO" id="GO:0015031">
    <property type="term" value="P:protein transport"/>
    <property type="evidence" value="ECO:0007669"/>
    <property type="project" value="UniProtKB-KW"/>
</dbReference>
<dbReference type="CDD" id="cd01486">
    <property type="entry name" value="Apg7"/>
    <property type="match status" value="1"/>
</dbReference>
<dbReference type="FunFam" id="3.40.140.100:FF:000003">
    <property type="entry name" value="Autophagy ubiquitin-activating enzyme ApgG"/>
    <property type="match status" value="1"/>
</dbReference>
<dbReference type="FunFam" id="3.40.50.720:FF:000243">
    <property type="entry name" value="Ubiquitin-like modifier-activating enzyme ATG7"/>
    <property type="match status" value="1"/>
</dbReference>
<dbReference type="FunFam" id="3.40.140.70:FF:000001">
    <property type="entry name" value="Ubiquitin-like modifier-activating enzyme atg7"/>
    <property type="match status" value="1"/>
</dbReference>
<dbReference type="Gene3D" id="3.40.50.720">
    <property type="entry name" value="NAD(P)-binding Rossmann-like Domain"/>
    <property type="match status" value="1"/>
</dbReference>
<dbReference type="Gene3D" id="3.40.140.100">
    <property type="entry name" value="Ubiquitin-like modifier-activating enzyme ATG7 C-terminal domain"/>
    <property type="match status" value="1"/>
</dbReference>
<dbReference type="Gene3D" id="3.40.140.70">
    <property type="entry name" value="Ubiquitin-like modifier-activating enzyme ATG7 N-terminal domain"/>
    <property type="match status" value="1"/>
</dbReference>
<dbReference type="InterPro" id="IPR006285">
    <property type="entry name" value="Atg7"/>
</dbReference>
<dbReference type="InterPro" id="IPR032197">
    <property type="entry name" value="Atg7_N"/>
</dbReference>
<dbReference type="InterPro" id="IPR042522">
    <property type="entry name" value="Atg7_N_1"/>
</dbReference>
<dbReference type="InterPro" id="IPR042523">
    <property type="entry name" value="Atg7_N_2"/>
</dbReference>
<dbReference type="InterPro" id="IPR045886">
    <property type="entry name" value="ThiF/MoeB/HesA"/>
</dbReference>
<dbReference type="InterPro" id="IPR000594">
    <property type="entry name" value="ThiF_NAD_FAD-bd"/>
</dbReference>
<dbReference type="InterPro" id="IPR035985">
    <property type="entry name" value="Ubiquitin-activating_enz"/>
</dbReference>
<dbReference type="NCBIfam" id="TIGR01381">
    <property type="entry name" value="E1_like_apg7"/>
    <property type="match status" value="1"/>
</dbReference>
<dbReference type="PANTHER" id="PTHR10953">
    <property type="entry name" value="UBIQUITIN-ACTIVATING ENZYME E1"/>
    <property type="match status" value="1"/>
</dbReference>
<dbReference type="PANTHER" id="PTHR10953:SF3">
    <property type="entry name" value="UBIQUITIN-LIKE MODIFIER-ACTIVATING ENZYME ATG7"/>
    <property type="match status" value="1"/>
</dbReference>
<dbReference type="Pfam" id="PF16420">
    <property type="entry name" value="ATG7_N"/>
    <property type="match status" value="1"/>
</dbReference>
<dbReference type="Pfam" id="PF00899">
    <property type="entry name" value="ThiF"/>
    <property type="match status" value="1"/>
</dbReference>
<dbReference type="SUPFAM" id="SSF69572">
    <property type="entry name" value="Activating enzymes of the ubiquitin-like proteins"/>
    <property type="match status" value="1"/>
</dbReference>
<comment type="function">
    <text evidence="1 3">E1-like activating enzyme involved in the 2 ubiquitin-like systems required for cytoplasm to vacuole transport (Cvt) and autophagy (PubMed:29417220). Activates ATG12 for its conjugation with ATG5 and ATG8 for its conjugation with phosphatidylethanolamine (By similarity). Both systems are needed for the ATG8 association to Cvt vesicles and autophagosomes membranes (By similarity). Autophagy is essential for maintenance of amino acid levels and protein synthesis under nitrogen starvation. Required for selective autophagic degradation of the nucleus (nucleophagy) as well as for mitophagy which contributes to regulate mitochondrial quantity and quality by eliminating the mitochondria to a basal level to fulfill cellular energy requirements and preventing excess ROS production (By similarity). Required for normal mycelial growth and conidiogenesis, and regulates sclerotial formation (PubMed:29417220). Plays an essential role in pathogenesis (PubMed:29417220).</text>
</comment>
<comment type="subunit">
    <text evidence="1 3">Homodimer (By similarity). Interacts with ATG8 through a thioester bond between Cys-555 and the C-terminal Gly of ATG8 and with ATG12 through a thioester bond between Cys-555 and the C-terminal Gly of ATG12 (By similarity). Also interacts with ATG3 (PubMed:29417220).</text>
</comment>
<comment type="subcellular location">
    <subcellularLocation>
        <location evidence="3">Cytoplasm</location>
    </subcellularLocation>
    <subcellularLocation>
        <location evidence="3">Preautophagosomal structure</location>
    </subcellularLocation>
</comment>
<comment type="domain">
    <text evidence="1">The C-terminal residues 660 to 699 are required for homodimerization, as well as the interactions with ATG3, ATG8 and ATG12; and the C-terminal 17 residues are required for the ATG8 lipidation (By similarity).</text>
</comment>
<comment type="domain">
    <text evidence="1">The GxGxxG motif is important for the function, possibly through binding with ATP (By similarity).</text>
</comment>
<comment type="disruption phenotype">
    <text evidence="3">Blocks the autophagic process (PubMed:29417220). Leads to fewer aerial hyphae and slower mycelial growth rate and fails to produce any conidia (PubMed:29417220). Also reduces the production of sclerotia in cold environment (PubMed:29417220). Fails to infect wounded cucumber leaves and shows only slight virulence on wounded tomato and grape fruits (PubMed:29417220).</text>
</comment>
<comment type="similarity">
    <text evidence="5">Belongs to the ATG7 family.</text>
</comment>